<gene>
    <name type="primary">cysE</name>
    <name type="ordered locus">STM3699</name>
</gene>
<proteinExistence type="evidence at protein level"/>
<protein>
    <recommendedName>
        <fullName>Serine acetyltransferase</fullName>
        <shortName>SAT</shortName>
        <ecNumber evidence="1">2.3.1.30</ecNumber>
    </recommendedName>
    <alternativeName>
        <fullName evidence="2">Serine transacetylase</fullName>
    </alternativeName>
</protein>
<accession>P29847</accession>
<evidence type="ECO:0000269" key="1">
    <source>
    </source>
</evidence>
<evidence type="ECO:0000303" key="2">
    <source>
    </source>
</evidence>
<evidence type="ECO:0000305" key="3"/>
<evidence type="ECO:0007829" key="4">
    <source>
        <dbReference type="PDB" id="4NU8"/>
    </source>
</evidence>
<keyword id="KW-0002">3D-structure</keyword>
<keyword id="KW-0012">Acyltransferase</keyword>
<keyword id="KW-0028">Amino-acid biosynthesis</keyword>
<keyword id="KW-0198">Cysteine biosynthesis</keyword>
<keyword id="KW-0963">Cytoplasm</keyword>
<keyword id="KW-1185">Reference proteome</keyword>
<keyword id="KW-0677">Repeat</keyword>
<keyword id="KW-0808">Transferase</keyword>
<reference key="1">
    <citation type="submission" date="1991-05" db="EMBL/GenBank/DDBJ databases">
        <authorList>
            <person name="Sivaprasad A.V."/>
            <person name="Kuczek E.S."/>
            <person name="Bawden C.S."/>
            <person name="Rogers G.E."/>
        </authorList>
    </citation>
    <scope>NUCLEOTIDE SEQUENCE [GENOMIC DNA]</scope>
    <source>
        <strain>LT2</strain>
    </source>
</reference>
<reference key="2">
    <citation type="patent" date="1990-07-25" number="GB2227243">
        <title>Cysteine biosynthesis in transgenic animals.</title>
        <authorList>
            <person name="Rogers G.E."/>
        </authorList>
    </citation>
    <scope>NUCLEOTIDE SEQUENCE [GENOMIC DNA]</scope>
</reference>
<reference key="3">
    <citation type="journal article" date="2001" name="Nature">
        <title>Complete genome sequence of Salmonella enterica serovar Typhimurium LT2.</title>
        <authorList>
            <person name="McClelland M."/>
            <person name="Sanderson K.E."/>
            <person name="Spieth J."/>
            <person name="Clifton S.W."/>
            <person name="Latreille P."/>
            <person name="Courtney L."/>
            <person name="Porwollik S."/>
            <person name="Ali J."/>
            <person name="Dante M."/>
            <person name="Du F."/>
            <person name="Hou S."/>
            <person name="Layman D."/>
            <person name="Leonard S."/>
            <person name="Nguyen C."/>
            <person name="Scott K."/>
            <person name="Holmes A."/>
            <person name="Grewal N."/>
            <person name="Mulvaney E."/>
            <person name="Ryan E."/>
            <person name="Sun H."/>
            <person name="Florea L."/>
            <person name="Miller W."/>
            <person name="Stoneking T."/>
            <person name="Nhan M."/>
            <person name="Waterston R."/>
            <person name="Wilson R.K."/>
        </authorList>
    </citation>
    <scope>NUCLEOTIDE SEQUENCE [LARGE SCALE GENOMIC DNA]</scope>
    <source>
        <strain>LT2 / SGSC1412 / ATCC 700720</strain>
    </source>
</reference>
<reference key="4">
    <citation type="journal article" date="1969" name="J. Biol. Chem.">
        <title>Purification and characterization of cysteine synthetase, a bifunctional protein complex, from Salmonella typhimurium.</title>
        <authorList>
            <person name="Kredich N.M."/>
            <person name="Becker M.A."/>
            <person name="Tomkins G.M."/>
        </authorList>
    </citation>
    <scope>FUNCTION</scope>
    <scope>CATALYTIC ACTIVITY</scope>
    <scope>BIOPHYSICOCHEMICAL PROPERTIES</scope>
    <scope>ACTIVITY REGULATION</scope>
    <scope>SUBUNIT</scope>
    <source>
        <strain>LT2</strain>
    </source>
</reference>
<organism>
    <name type="scientific">Salmonella typhimurium (strain LT2 / SGSC1412 / ATCC 700720)</name>
    <dbReference type="NCBI Taxonomy" id="99287"/>
    <lineage>
        <taxon>Bacteria</taxon>
        <taxon>Pseudomonadati</taxon>
        <taxon>Pseudomonadota</taxon>
        <taxon>Gammaproteobacteria</taxon>
        <taxon>Enterobacterales</taxon>
        <taxon>Enterobacteriaceae</taxon>
        <taxon>Salmonella</taxon>
    </lineage>
</organism>
<sequence length="273" mass="29291">MPCEELEIVWKNIKAEARALADCEPMLASFYHATLLKHENLGSALSYMLANKLASPIMPAIAIREVVEEAYAADPEMIASAACDIQAVRTRDPAVDKYSTPLLYLKGFHALQAYRIGHWLWNKGRRALAIFLQNQVSVSFQVDIHPAAKIGRGIMLDHATGIVVGETAVIEDDVSILQSVTLGGTGKTSGDRHPKIREGVMIGAGAKILGNIEVGRGAKIGAGSVVLQPVPPHTTAAGVPARIVGKPGSDKPSMDMDQHFNGIHHTFEYGDGI</sequence>
<dbReference type="EC" id="2.3.1.30" evidence="1"/>
<dbReference type="EMBL" id="X59594">
    <property type="protein sequence ID" value="CAA42163.1"/>
    <property type="molecule type" value="Genomic_DNA"/>
</dbReference>
<dbReference type="EMBL" id="A00198">
    <property type="protein sequence ID" value="CAA00039.1"/>
    <property type="molecule type" value="Unassigned_DNA"/>
</dbReference>
<dbReference type="EMBL" id="AE006468">
    <property type="protein sequence ID" value="AAL22558.1"/>
    <property type="molecule type" value="Genomic_DNA"/>
</dbReference>
<dbReference type="PIR" id="S29568">
    <property type="entry name" value="S29568"/>
</dbReference>
<dbReference type="RefSeq" id="NP_462599.1">
    <property type="nucleotide sequence ID" value="NC_003197.2"/>
</dbReference>
<dbReference type="RefSeq" id="WP_001112113.1">
    <property type="nucleotide sequence ID" value="NC_003197.2"/>
</dbReference>
<dbReference type="PDB" id="4LI3">
    <property type="method" value="X-ray"/>
    <property type="resolution" value="2.59 A"/>
    <property type="chains" value="A=266-273"/>
</dbReference>
<dbReference type="PDB" id="4NU8">
    <property type="method" value="X-ray"/>
    <property type="resolution" value="2.07 A"/>
    <property type="chains" value="A=266-273"/>
</dbReference>
<dbReference type="PDB" id="4ZU1">
    <property type="method" value="X-ray"/>
    <property type="resolution" value="2.20 A"/>
    <property type="chains" value="A=264-273"/>
</dbReference>
<dbReference type="PDB" id="4ZU6">
    <property type="method" value="X-ray"/>
    <property type="resolution" value="2.03 A"/>
    <property type="chains" value="B=264-273"/>
</dbReference>
<dbReference type="PDB" id="5DBE">
    <property type="method" value="X-ray"/>
    <property type="resolution" value="2.25 A"/>
    <property type="chains" value="A=264-273"/>
</dbReference>
<dbReference type="PDB" id="6AIF">
    <property type="method" value="X-ray"/>
    <property type="resolution" value="2.30 A"/>
    <property type="chains" value="B=264-273"/>
</dbReference>
<dbReference type="PDBsum" id="4LI3"/>
<dbReference type="PDBsum" id="4NU8"/>
<dbReference type="PDBsum" id="4ZU1"/>
<dbReference type="PDBsum" id="4ZU6"/>
<dbReference type="PDBsum" id="5DBE"/>
<dbReference type="PDBsum" id="6AIF"/>
<dbReference type="SMR" id="P29847"/>
<dbReference type="STRING" id="99287.STM3699"/>
<dbReference type="PaxDb" id="99287-STM3699"/>
<dbReference type="GeneID" id="1255223"/>
<dbReference type="KEGG" id="stm:STM3699"/>
<dbReference type="PATRIC" id="fig|99287.12.peg.3912"/>
<dbReference type="HOGENOM" id="CLU_051638_0_1_6"/>
<dbReference type="OMA" id="MPAIALR"/>
<dbReference type="PhylomeDB" id="P29847"/>
<dbReference type="BioCyc" id="SENT99287:STM3699-MONOMER"/>
<dbReference type="BRENDA" id="2.3.1.30">
    <property type="organism ID" value="5542"/>
</dbReference>
<dbReference type="UniPathway" id="UPA00136">
    <property type="reaction ID" value="UER00199"/>
</dbReference>
<dbReference type="EvolutionaryTrace" id="P29847"/>
<dbReference type="PHI-base" id="PHI:8125"/>
<dbReference type="Proteomes" id="UP000001014">
    <property type="component" value="Chromosome"/>
</dbReference>
<dbReference type="GO" id="GO:0005829">
    <property type="term" value="C:cytosol"/>
    <property type="evidence" value="ECO:0000318"/>
    <property type="project" value="GO_Central"/>
</dbReference>
<dbReference type="GO" id="GO:0009001">
    <property type="term" value="F:serine O-acetyltransferase activity"/>
    <property type="evidence" value="ECO:0000318"/>
    <property type="project" value="GO_Central"/>
</dbReference>
<dbReference type="GO" id="GO:0006535">
    <property type="term" value="P:cysteine biosynthetic process from serine"/>
    <property type="evidence" value="ECO:0007669"/>
    <property type="project" value="InterPro"/>
</dbReference>
<dbReference type="CDD" id="cd03354">
    <property type="entry name" value="LbH_SAT"/>
    <property type="match status" value="1"/>
</dbReference>
<dbReference type="FunFam" id="1.10.3130.10:FF:000001">
    <property type="entry name" value="Acetyltransferase"/>
    <property type="match status" value="1"/>
</dbReference>
<dbReference type="FunFam" id="2.160.10.10:FF:000002">
    <property type="entry name" value="Serine acetyltransferase"/>
    <property type="match status" value="1"/>
</dbReference>
<dbReference type="Gene3D" id="2.160.10.10">
    <property type="entry name" value="Hexapeptide repeat proteins"/>
    <property type="match status" value="1"/>
</dbReference>
<dbReference type="Gene3D" id="1.10.3130.10">
    <property type="entry name" value="serine acetyltransferase, domain 1"/>
    <property type="match status" value="1"/>
</dbReference>
<dbReference type="InterPro" id="IPR001451">
    <property type="entry name" value="Hexapep"/>
</dbReference>
<dbReference type="InterPro" id="IPR018357">
    <property type="entry name" value="Hexapep_transf_CS"/>
</dbReference>
<dbReference type="InterPro" id="IPR045304">
    <property type="entry name" value="LbH_SAT"/>
</dbReference>
<dbReference type="InterPro" id="IPR010493">
    <property type="entry name" value="Ser_AcTrfase_N"/>
</dbReference>
<dbReference type="InterPro" id="IPR042122">
    <property type="entry name" value="Ser_AcTrfase_N_sf"/>
</dbReference>
<dbReference type="InterPro" id="IPR005881">
    <property type="entry name" value="Ser_O-AcTrfase"/>
</dbReference>
<dbReference type="InterPro" id="IPR053376">
    <property type="entry name" value="Serine_acetyltransferase"/>
</dbReference>
<dbReference type="InterPro" id="IPR011004">
    <property type="entry name" value="Trimer_LpxA-like_sf"/>
</dbReference>
<dbReference type="NCBIfam" id="TIGR01172">
    <property type="entry name" value="cysE"/>
    <property type="match status" value="1"/>
</dbReference>
<dbReference type="NCBIfam" id="NF041874">
    <property type="entry name" value="EPS_EpsC"/>
    <property type="match status" value="1"/>
</dbReference>
<dbReference type="NCBIfam" id="NF008349">
    <property type="entry name" value="PRK11132.1"/>
    <property type="match status" value="1"/>
</dbReference>
<dbReference type="PANTHER" id="PTHR42811">
    <property type="entry name" value="SERINE ACETYLTRANSFERASE"/>
    <property type="match status" value="1"/>
</dbReference>
<dbReference type="Pfam" id="PF00132">
    <property type="entry name" value="Hexapep"/>
    <property type="match status" value="1"/>
</dbReference>
<dbReference type="Pfam" id="PF06426">
    <property type="entry name" value="SATase_N"/>
    <property type="match status" value="1"/>
</dbReference>
<dbReference type="SMART" id="SM00971">
    <property type="entry name" value="SATase_N"/>
    <property type="match status" value="1"/>
</dbReference>
<dbReference type="SUPFAM" id="SSF51161">
    <property type="entry name" value="Trimeric LpxA-like enzymes"/>
    <property type="match status" value="1"/>
</dbReference>
<dbReference type="PROSITE" id="PS00101">
    <property type="entry name" value="HEXAPEP_TRANSFERASES"/>
    <property type="match status" value="1"/>
</dbReference>
<feature type="chain" id="PRO_0000068672" description="Serine acetyltransferase">
    <location>
        <begin position="1"/>
        <end position="273"/>
    </location>
</feature>
<feature type="turn" evidence="4">
    <location>
        <begin position="269"/>
        <end position="272"/>
    </location>
</feature>
<comment type="catalytic activity">
    <reaction evidence="1">
        <text>L-serine + acetyl-CoA = O-acetyl-L-serine + CoA</text>
        <dbReference type="Rhea" id="RHEA:24560"/>
        <dbReference type="ChEBI" id="CHEBI:33384"/>
        <dbReference type="ChEBI" id="CHEBI:57287"/>
        <dbReference type="ChEBI" id="CHEBI:57288"/>
        <dbReference type="ChEBI" id="CHEBI:58340"/>
        <dbReference type="EC" id="2.3.1.30"/>
    </reaction>
</comment>
<comment type="activity regulation">
    <text evidence="1">Sensitive to feedback inhibition by L-cysteine.</text>
</comment>
<comment type="biophysicochemical properties">
    <kinetics>
        <KM evidence="1">6.9 mM for L-serine as isolated subunit</KM>
        <KM evidence="1">7.4 mM for L-serine in complex with CysK</KM>
        <KM evidence="1">1.2 mM for acetyl-CoA as isolated subunit and in complex with CysK</KM>
    </kinetics>
</comment>
<comment type="pathway">
    <text>Amino-acid biosynthesis; L-cysteine biosynthesis; L-cysteine from L-serine: step 1/2.</text>
</comment>
<comment type="subunit">
    <text evidence="1">Part of the cysteine synthase complex formed at a ratio of 1 copy of this protein and 2 copies of O-acetylserine sulfhydrylase (cysK). The complex reversibly dissociates in the presence of O-acetyl-L-serine in the absence of hydrogen sulfide.</text>
</comment>
<comment type="subcellular location">
    <subcellularLocation>
        <location evidence="3">Cytoplasm</location>
    </subcellularLocation>
</comment>
<comment type="similarity">
    <text evidence="3">Belongs to the transferase hexapeptide repeat family.</text>
</comment>
<name>CYSE_SALTY</name>